<protein>
    <recommendedName>
        <fullName evidence="3">Agelaiatoxin-8</fullName>
        <shortName evidence="3">AVTx8</shortName>
    </recommendedName>
</protein>
<sequence>INWKKLGKALNALL</sequence>
<organism>
    <name type="scientific">Agelaia vicina</name>
    <name type="common">Wasp</name>
    <dbReference type="NCBI Taxonomy" id="2724002"/>
    <lineage>
        <taxon>Eukaryota</taxon>
        <taxon>Metazoa</taxon>
        <taxon>Ecdysozoa</taxon>
        <taxon>Arthropoda</taxon>
        <taxon>Hexapoda</taxon>
        <taxon>Insecta</taxon>
        <taxon>Pterygota</taxon>
        <taxon>Neoptera</taxon>
        <taxon>Endopterygota</taxon>
        <taxon>Hymenoptera</taxon>
        <taxon>Apocrita</taxon>
        <taxon>Aculeata</taxon>
        <taxon>Vespoidea</taxon>
        <taxon>Vespidae</taxon>
        <taxon>Polistinae</taxon>
        <taxon>Epiponini</taxon>
        <taxon>Agelaia</taxon>
    </lineage>
</organism>
<evidence type="ECO:0000269" key="1">
    <source>
    </source>
</evidence>
<evidence type="ECO:0000269" key="2">
    <source>
    </source>
</evidence>
<evidence type="ECO:0000303" key="3">
    <source>
    </source>
</evidence>
<evidence type="ECO:0000305" key="4"/>
<evidence type="ECO:0000305" key="5">
    <source>
    </source>
</evidence>
<comment type="function">
    <text evidence="1 2">Toxin active in modulation of gamma-aminobutyric acid (GABA) neurotransmission (PubMed:15621014, PubMed:28621878). Increases GABA release and inhibits GABA uptake in synaptosomes from rat cerebral cortex (PubMed:28621878). May acts on GABA transporters, since its action on GABA uptake and GABA release is not altered by the presence of calcium, sodium and potassium channel blockers (PubMed:28621878). May also modulate GABA(A) receptors, since it significantly decreases GABA-binding in synaptic membranes from rat brain cortex (PubMed:28621878). In addition, decreases SLC6A1- and SLC6A11-mediated GABA uptake in transfected COS-7 cells, in uncompetitive and mixed inhibition modes, respectively (PubMed:28621878). It is noteworthy that the inhibition of GABA uptake could be an indirect result of an increased GABA release (PubMed:28621878). In vivo, microinjections of this toxin into the nigral area of rodents brains attenuates panic attack-like responses elicited by GABAergic disinhibition in the dorsal midbrain with intramesencephalic administration of bicuculline (PubMed:15621014). Based on these results, authors suggest that this toxin may be acting as an agonist of GABA(A) receptors in the ventral mesencephalon (PubMed:15621014).</text>
</comment>
<comment type="subcellular location">
    <subcellularLocation>
        <location evidence="2">Secreted</location>
    </subcellularLocation>
</comment>
<comment type="tissue specificity">
    <text evidence="5">Expressed by the venom gland.</text>
</comment>
<comment type="mass spectrometry"/>
<comment type="similarity">
    <text evidence="4">Belongs to the MCD family. Mastoparan subfamily.</text>
</comment>
<name>MAST8_AGEVI</name>
<proteinExistence type="evidence at protein level"/>
<feature type="peptide" id="PRO_0000458991" description="Agelaiatoxin-8" evidence="2">
    <location>
        <begin position="1"/>
        <end position="14"/>
    </location>
</feature>
<feature type="unsure residue" description="N or D" evidence="5">
    <location>
        <position position="2"/>
    </location>
</feature>
<feature type="unsure residue" description="N or D" evidence="5">
    <location>
        <position position="11"/>
    </location>
</feature>
<reference key="1">
    <citation type="journal article" date="2017" name="J. Biochem. Mol. Toxicol.">
        <title>Isolation and chemical characterization of agelaiatoxin8 (AvTx8) from Agelaia vicina wasp venom and its biological effects on GABA neurotransmission.</title>
        <authorList>
            <person name="Pizzo A.B."/>
            <person name="Beleboni R.O."/>
            <person name="Gomes Carolino R.O."/>
            <person name="de Oliveira L."/>
            <person name="Miranda A."/>
            <person name="Coutinho-Netto J."/>
            <person name="Fontana A.C.K."/>
            <person name="Dos Santos W.F."/>
        </authorList>
    </citation>
    <scope>PROTEIN SEQUENCE</scope>
    <scope>FUNCTION</scope>
    <scope>MASS SPECTROMETRY</scope>
    <scope>SUBCELLULAR LOCATION</scope>
</reference>
<reference key="2">
    <citation type="journal article" date="2005" name="Brain Res.">
        <title>Effects of microinjections of neurotoxin AvTx8, isolated from the social wasp Agelaia vicina (Hymenoptera, Vespidae) venom, on GABAergic nigrotectal pathways.</title>
        <authorList>
            <person name="de Oliveira L."/>
            <person name="Cunha A.O."/>
            <person name="Mortari M.R."/>
            <person name="Pizzo A.B."/>
            <person name="Miranda A."/>
            <person name="Coimbra N.C."/>
            <person name="dos Santos W.F."/>
        </authorList>
    </citation>
    <scope>FUNCTION</scope>
</reference>
<keyword id="KW-0903">Direct protein sequencing</keyword>
<keyword id="KW-0872">Ion channel impairing toxin</keyword>
<keyword id="KW-0528">Neurotoxin</keyword>
<keyword id="KW-0629">Postsynaptic neurotoxin</keyword>
<keyword id="KW-0964">Secreted</keyword>
<keyword id="KW-0800">Toxin</keyword>
<dbReference type="GO" id="GO:0005576">
    <property type="term" value="C:extracellular region"/>
    <property type="evidence" value="ECO:0007669"/>
    <property type="project" value="UniProtKB-SubCell"/>
</dbReference>
<dbReference type="GO" id="GO:0035792">
    <property type="term" value="C:host cell postsynaptic membrane"/>
    <property type="evidence" value="ECO:0007669"/>
    <property type="project" value="UniProtKB-KW"/>
</dbReference>
<dbReference type="GO" id="GO:0099106">
    <property type="term" value="F:ion channel regulator activity"/>
    <property type="evidence" value="ECO:0007669"/>
    <property type="project" value="UniProtKB-KW"/>
</dbReference>
<dbReference type="GO" id="GO:0090729">
    <property type="term" value="F:toxin activity"/>
    <property type="evidence" value="ECO:0007669"/>
    <property type="project" value="UniProtKB-KW"/>
</dbReference>
<accession>P0DX46</accession>